<proteinExistence type="evidence at transcript level"/>
<organism>
    <name type="scientific">Gorilla gorilla gorilla</name>
    <name type="common">Western lowland gorilla</name>
    <dbReference type="NCBI Taxonomy" id="9595"/>
    <lineage>
        <taxon>Eukaryota</taxon>
        <taxon>Metazoa</taxon>
        <taxon>Chordata</taxon>
        <taxon>Craniata</taxon>
        <taxon>Vertebrata</taxon>
        <taxon>Euteleostomi</taxon>
        <taxon>Mammalia</taxon>
        <taxon>Eutheria</taxon>
        <taxon>Euarchontoglires</taxon>
        <taxon>Primates</taxon>
        <taxon>Haplorrhini</taxon>
        <taxon>Catarrhini</taxon>
        <taxon>Hominidae</taxon>
        <taxon>Gorilla</taxon>
    </lineage>
</organism>
<keyword id="KW-1015">Disulfide bond</keyword>
<keyword id="KW-0325">Glycoprotein</keyword>
<keyword id="KW-0391">Immunity</keyword>
<keyword id="KW-0472">Membrane</keyword>
<keyword id="KW-0490">MHC I</keyword>
<keyword id="KW-0597">Phosphoprotein</keyword>
<keyword id="KW-1185">Reference proteome</keyword>
<keyword id="KW-0732">Signal</keyword>
<keyword id="KW-0812">Transmembrane</keyword>
<keyword id="KW-1133">Transmembrane helix</keyword>
<accession>P30375</accession>
<comment type="function">
    <text>Involved in the presentation of foreign antigens to the immune system.</text>
</comment>
<comment type="subunit">
    <text>Heterodimer of an alpha chain and a beta chain (beta-2-microglobulin).</text>
</comment>
<comment type="subcellular location">
    <subcellularLocation>
        <location>Membrane</location>
        <topology>Single-pass type I membrane protein</topology>
    </subcellularLocation>
</comment>
<comment type="similarity">
    <text evidence="8">Belongs to the MHC class I family.</text>
</comment>
<protein>
    <recommendedName>
        <fullName>Class I histocompatibility antigen, Gogo-A*0101 alpha chain</fullName>
    </recommendedName>
</protein>
<reference key="1">
    <citation type="journal article" date="1991" name="J. Exp. Med.">
        <title>Gorilla class I major histocompatibility complex alleles: comparison to human and chimpanzee class I.</title>
        <authorList>
            <person name="Lawlor D.A."/>
            <person name="Warren E."/>
            <person name="Taylor P."/>
            <person name="Parham P."/>
        </authorList>
    </citation>
    <scope>NUCLEOTIDE SEQUENCE [MRNA]</scope>
</reference>
<evidence type="ECO:0000250" key="1"/>
<evidence type="ECO:0000250" key="2">
    <source>
        <dbReference type="UniProtKB" id="P04439"/>
    </source>
</evidence>
<evidence type="ECO:0000250" key="3">
    <source>
        <dbReference type="UniProtKB" id="P18462"/>
    </source>
</evidence>
<evidence type="ECO:0000250" key="4">
    <source>
        <dbReference type="UniProtKB" id="P30443"/>
    </source>
</evidence>
<evidence type="ECO:0000255" key="5"/>
<evidence type="ECO:0000255" key="6">
    <source>
        <dbReference type="PROSITE-ProRule" id="PRU00114"/>
    </source>
</evidence>
<evidence type="ECO:0000256" key="7">
    <source>
        <dbReference type="SAM" id="MobiDB-lite"/>
    </source>
</evidence>
<evidence type="ECO:0000305" key="8"/>
<feature type="signal peptide" evidence="1">
    <location>
        <begin position="1"/>
        <end position="24"/>
    </location>
</feature>
<feature type="chain" id="PRO_0000018897" description="Class I histocompatibility antigen, Gogo-A*0101 alpha chain">
    <location>
        <begin position="25"/>
        <end position="365"/>
    </location>
</feature>
<feature type="topological domain" description="Extracellular" evidence="5">
    <location>
        <begin position="25"/>
        <end position="308"/>
    </location>
</feature>
<feature type="transmembrane region" description="Helical" evidence="5">
    <location>
        <begin position="309"/>
        <end position="332"/>
    </location>
</feature>
<feature type="topological domain" description="Cytoplasmic" evidence="5">
    <location>
        <begin position="333"/>
        <end position="365"/>
    </location>
</feature>
<feature type="domain" description="Ig-like C1-type">
    <location>
        <begin position="209"/>
        <end position="297"/>
    </location>
</feature>
<feature type="region of interest" description="Alpha-1">
    <location>
        <begin position="25"/>
        <end position="114"/>
    </location>
</feature>
<feature type="region of interest" description="Alpha-2">
    <location>
        <begin position="115"/>
        <end position="206"/>
    </location>
</feature>
<feature type="region of interest" description="Alpha-3">
    <location>
        <begin position="207"/>
        <end position="298"/>
    </location>
</feature>
<feature type="region of interest" description="Connecting peptide">
    <location>
        <begin position="299"/>
        <end position="308"/>
    </location>
</feature>
<feature type="region of interest" description="Disordered" evidence="7">
    <location>
        <begin position="338"/>
        <end position="365"/>
    </location>
</feature>
<feature type="compositionally biased region" description="Low complexity" evidence="7">
    <location>
        <begin position="342"/>
        <end position="359"/>
    </location>
</feature>
<feature type="modified residue" description="Phosphoserine" evidence="3">
    <location>
        <position position="343"/>
    </location>
</feature>
<feature type="modified residue" description="Phosphotyrosine" evidence="3">
    <location>
        <position position="344"/>
    </location>
</feature>
<feature type="modified residue" description="Phosphoserine" evidence="3">
    <location>
        <position position="345"/>
    </location>
</feature>
<feature type="modified residue" description="Phosphoserine" evidence="3">
    <location>
        <position position="349"/>
    </location>
</feature>
<feature type="modified residue" description="Phosphoserine" evidence="2">
    <location>
        <position position="350"/>
    </location>
</feature>
<feature type="modified residue" description="Phosphoserine" evidence="4">
    <location>
        <position position="352"/>
    </location>
</feature>
<feature type="modified residue" description="Phosphoserine" evidence="4">
    <location>
        <position position="356"/>
    </location>
</feature>
<feature type="modified residue" description="Phosphoserine" evidence="4">
    <location>
        <position position="359"/>
    </location>
</feature>
<feature type="glycosylation site" description="N-linked (GlcNAc...) asparagine" evidence="1">
    <location>
        <position position="110"/>
    </location>
</feature>
<feature type="disulfide bond" evidence="6">
    <location>
        <begin position="125"/>
        <end position="188"/>
    </location>
</feature>
<feature type="disulfide bond" evidence="6">
    <location>
        <begin position="227"/>
        <end position="283"/>
    </location>
</feature>
<name>1A01_GORGO</name>
<dbReference type="EMBL" id="X60258">
    <property type="protein sequence ID" value="CAA42810.1"/>
    <property type="molecule type" value="mRNA"/>
</dbReference>
<dbReference type="PIR" id="JH0534">
    <property type="entry name" value="JH0534"/>
</dbReference>
<dbReference type="SMR" id="P30375"/>
<dbReference type="FunCoup" id="P30375">
    <property type="interactions" value="815"/>
</dbReference>
<dbReference type="InParanoid" id="P30375"/>
<dbReference type="Proteomes" id="UP000001519">
    <property type="component" value="Unplaced"/>
</dbReference>
<dbReference type="GO" id="GO:0031901">
    <property type="term" value="C:early endosome membrane"/>
    <property type="evidence" value="ECO:0007669"/>
    <property type="project" value="UniProtKB-ARBA"/>
</dbReference>
<dbReference type="GO" id="GO:0012507">
    <property type="term" value="C:ER to Golgi transport vesicle membrane"/>
    <property type="evidence" value="ECO:0007669"/>
    <property type="project" value="UniProtKB-ARBA"/>
</dbReference>
<dbReference type="GO" id="GO:0009897">
    <property type="term" value="C:external side of plasma membrane"/>
    <property type="evidence" value="ECO:0000318"/>
    <property type="project" value="GO_Central"/>
</dbReference>
<dbReference type="GO" id="GO:0005615">
    <property type="term" value="C:extracellular space"/>
    <property type="evidence" value="ECO:0000318"/>
    <property type="project" value="GO_Central"/>
</dbReference>
<dbReference type="GO" id="GO:0098553">
    <property type="term" value="C:lumenal side of endoplasmic reticulum membrane"/>
    <property type="evidence" value="ECO:0007669"/>
    <property type="project" value="UniProtKB-ARBA"/>
</dbReference>
<dbReference type="GO" id="GO:0042612">
    <property type="term" value="C:MHC class I protein complex"/>
    <property type="evidence" value="ECO:0007669"/>
    <property type="project" value="UniProtKB-KW"/>
</dbReference>
<dbReference type="GO" id="GO:0030670">
    <property type="term" value="C:phagocytic vesicle membrane"/>
    <property type="evidence" value="ECO:0007669"/>
    <property type="project" value="UniProtKB-ARBA"/>
</dbReference>
<dbReference type="GO" id="GO:0055038">
    <property type="term" value="C:recycling endosome membrane"/>
    <property type="evidence" value="ECO:0007669"/>
    <property type="project" value="UniProtKB-ARBA"/>
</dbReference>
<dbReference type="GO" id="GO:0042605">
    <property type="term" value="F:peptide antigen binding"/>
    <property type="evidence" value="ECO:0000318"/>
    <property type="project" value="GO_Central"/>
</dbReference>
<dbReference type="GO" id="GO:0005102">
    <property type="term" value="F:signaling receptor binding"/>
    <property type="evidence" value="ECO:0000318"/>
    <property type="project" value="GO_Central"/>
</dbReference>
<dbReference type="GO" id="GO:0002486">
    <property type="term" value="P:antigen processing and presentation of endogenous peptide antigen via MHC class I via ER pathway, TAP-independent"/>
    <property type="evidence" value="ECO:0000318"/>
    <property type="project" value="GO_Central"/>
</dbReference>
<dbReference type="GO" id="GO:0002476">
    <property type="term" value="P:antigen processing and presentation of endogenous peptide antigen via MHC class Ib"/>
    <property type="evidence" value="ECO:0000318"/>
    <property type="project" value="GO_Central"/>
</dbReference>
<dbReference type="GO" id="GO:0006955">
    <property type="term" value="P:immune response"/>
    <property type="evidence" value="ECO:0000318"/>
    <property type="project" value="GO_Central"/>
</dbReference>
<dbReference type="GO" id="GO:0001916">
    <property type="term" value="P:positive regulation of T cell mediated cytotoxicity"/>
    <property type="evidence" value="ECO:0000318"/>
    <property type="project" value="GO_Central"/>
</dbReference>
<dbReference type="CDD" id="cd21027">
    <property type="entry name" value="IgC1_MHC_Ia_HLA-A"/>
    <property type="match status" value="1"/>
</dbReference>
<dbReference type="FunFam" id="2.60.40.10:FF:000014">
    <property type="entry name" value="H-2 class I histocompatibility antigen, alpha chain"/>
    <property type="match status" value="1"/>
</dbReference>
<dbReference type="FunFam" id="3.30.500.10:FF:000001">
    <property type="entry name" value="H-2 class I histocompatibility antigen, alpha chain"/>
    <property type="match status" value="1"/>
</dbReference>
<dbReference type="Gene3D" id="2.60.40.10">
    <property type="entry name" value="Immunoglobulins"/>
    <property type="match status" value="1"/>
</dbReference>
<dbReference type="Gene3D" id="3.30.500.10">
    <property type="entry name" value="MHC class I-like antigen recognition-like"/>
    <property type="match status" value="1"/>
</dbReference>
<dbReference type="InterPro" id="IPR007110">
    <property type="entry name" value="Ig-like_dom"/>
</dbReference>
<dbReference type="InterPro" id="IPR036179">
    <property type="entry name" value="Ig-like_dom_sf"/>
</dbReference>
<dbReference type="InterPro" id="IPR013783">
    <property type="entry name" value="Ig-like_fold"/>
</dbReference>
<dbReference type="InterPro" id="IPR003006">
    <property type="entry name" value="Ig/MHC_CS"/>
</dbReference>
<dbReference type="InterPro" id="IPR003597">
    <property type="entry name" value="Ig_C1-set"/>
</dbReference>
<dbReference type="InterPro" id="IPR050208">
    <property type="entry name" value="MHC_class-I_related"/>
</dbReference>
<dbReference type="InterPro" id="IPR011161">
    <property type="entry name" value="MHC_I-like_Ag-recog"/>
</dbReference>
<dbReference type="InterPro" id="IPR037055">
    <property type="entry name" value="MHC_I-like_Ag-recog_sf"/>
</dbReference>
<dbReference type="InterPro" id="IPR011162">
    <property type="entry name" value="MHC_I/II-like_Ag-recog"/>
</dbReference>
<dbReference type="InterPro" id="IPR001039">
    <property type="entry name" value="MHC_I_a_a1/a2"/>
</dbReference>
<dbReference type="InterPro" id="IPR010579">
    <property type="entry name" value="MHC_I_a_C"/>
</dbReference>
<dbReference type="PANTHER" id="PTHR16675:SF229">
    <property type="entry name" value="HLA CLASS I HISTOCOMPATIBILITY ANTIGEN, A ALPHA CHAIN"/>
    <property type="match status" value="1"/>
</dbReference>
<dbReference type="PANTHER" id="PTHR16675">
    <property type="entry name" value="MHC CLASS I-RELATED"/>
    <property type="match status" value="1"/>
</dbReference>
<dbReference type="Pfam" id="PF07654">
    <property type="entry name" value="C1-set"/>
    <property type="match status" value="1"/>
</dbReference>
<dbReference type="Pfam" id="PF00129">
    <property type="entry name" value="MHC_I"/>
    <property type="match status" value="1"/>
</dbReference>
<dbReference type="Pfam" id="PF06623">
    <property type="entry name" value="MHC_I_C"/>
    <property type="match status" value="1"/>
</dbReference>
<dbReference type="PRINTS" id="PR01638">
    <property type="entry name" value="MHCCLASSI"/>
</dbReference>
<dbReference type="SMART" id="SM00407">
    <property type="entry name" value="IGc1"/>
    <property type="match status" value="1"/>
</dbReference>
<dbReference type="SUPFAM" id="SSF48726">
    <property type="entry name" value="Immunoglobulin"/>
    <property type="match status" value="1"/>
</dbReference>
<dbReference type="SUPFAM" id="SSF54452">
    <property type="entry name" value="MHC antigen-recognition domain"/>
    <property type="match status" value="1"/>
</dbReference>
<dbReference type="PROSITE" id="PS50835">
    <property type="entry name" value="IG_LIKE"/>
    <property type="match status" value="1"/>
</dbReference>
<dbReference type="PROSITE" id="PS00290">
    <property type="entry name" value="IG_MHC"/>
    <property type="match status" value="1"/>
</dbReference>
<sequence>MAVMAPRTLVLLLSGALALTQTWAGSHSMRYFSTSVSRPGRGEPRFIAVGYVDDTQFVRFDSDAASQRMEPRAPWIEQEGPEYWDRNTRNVKAHSQTDRVDLGTLRGYYNQSEDGSHTIQRMYGCDVGSDGRFLRGYQQDAYDGKDYIALNEDLRSWTAADMAAEITKRKWEAAHFAEQLRAYLEGTCVEWLRRHLENGKETLQRTDAPKTHMTHHAVSDHEAILRCWALSFYPAEITLTWQRDGEDQTQDTELVETRPAGDGTFQKWAAVVVPSGQEQRYTCHVQHEGLPEPLTLRWEPSSQPTIPIVGIIAGLVLFGAVIAGAVVAAVRWRRKSSDRKGGSYSQAASSDSAQGSDVSLTACKV</sequence>